<dbReference type="EC" id="2.7.1.2" evidence="1"/>
<dbReference type="EMBL" id="AE004091">
    <property type="protein sequence ID" value="AAG06581.1"/>
    <property type="molecule type" value="Genomic_DNA"/>
</dbReference>
<dbReference type="PIR" id="F83246">
    <property type="entry name" value="F83246"/>
</dbReference>
<dbReference type="RefSeq" id="NP_251883.1">
    <property type="nucleotide sequence ID" value="NC_002516.2"/>
</dbReference>
<dbReference type="RefSeq" id="WP_003114838.1">
    <property type="nucleotide sequence ID" value="NZ_QZGE01000019.1"/>
</dbReference>
<dbReference type="SMR" id="Q9HZ46"/>
<dbReference type="FunCoup" id="Q9HZ46">
    <property type="interactions" value="255"/>
</dbReference>
<dbReference type="STRING" id="208964.PA3193"/>
<dbReference type="PaxDb" id="208964-PA3193"/>
<dbReference type="DNASU" id="882908"/>
<dbReference type="GeneID" id="882908"/>
<dbReference type="KEGG" id="pae:PA3193"/>
<dbReference type="PATRIC" id="fig|208964.12.peg.3339"/>
<dbReference type="PseudoCAP" id="PA3193"/>
<dbReference type="HOGENOM" id="CLU_042582_1_0_6"/>
<dbReference type="InParanoid" id="Q9HZ46"/>
<dbReference type="OrthoDB" id="9800595at2"/>
<dbReference type="PhylomeDB" id="Q9HZ46"/>
<dbReference type="BioCyc" id="PAER208964:G1FZ6-3253-MONOMER"/>
<dbReference type="Proteomes" id="UP000002438">
    <property type="component" value="Chromosome"/>
</dbReference>
<dbReference type="GO" id="GO:0005829">
    <property type="term" value="C:cytosol"/>
    <property type="evidence" value="ECO:0000318"/>
    <property type="project" value="GO_Central"/>
</dbReference>
<dbReference type="GO" id="GO:0005524">
    <property type="term" value="F:ATP binding"/>
    <property type="evidence" value="ECO:0007669"/>
    <property type="project" value="UniProtKB-UniRule"/>
</dbReference>
<dbReference type="GO" id="GO:0005536">
    <property type="term" value="F:D-glucose binding"/>
    <property type="evidence" value="ECO:0007669"/>
    <property type="project" value="InterPro"/>
</dbReference>
<dbReference type="GO" id="GO:0004340">
    <property type="term" value="F:glucokinase activity"/>
    <property type="evidence" value="ECO:0000318"/>
    <property type="project" value="GO_Central"/>
</dbReference>
<dbReference type="GO" id="GO:0006096">
    <property type="term" value="P:glycolytic process"/>
    <property type="evidence" value="ECO:0007669"/>
    <property type="project" value="UniProtKB-UniRule"/>
</dbReference>
<dbReference type="CDD" id="cd24008">
    <property type="entry name" value="ASKHA_NBD_GLK"/>
    <property type="match status" value="1"/>
</dbReference>
<dbReference type="FunFam" id="3.40.367.20:FF:000013">
    <property type="entry name" value="Glucokinase"/>
    <property type="match status" value="1"/>
</dbReference>
<dbReference type="Gene3D" id="3.30.420.40">
    <property type="match status" value="1"/>
</dbReference>
<dbReference type="Gene3D" id="3.40.367.20">
    <property type="match status" value="1"/>
</dbReference>
<dbReference type="HAMAP" id="MF_00524">
    <property type="entry name" value="Glucokinase"/>
    <property type="match status" value="1"/>
</dbReference>
<dbReference type="InterPro" id="IPR043129">
    <property type="entry name" value="ATPase_NBD"/>
</dbReference>
<dbReference type="InterPro" id="IPR050201">
    <property type="entry name" value="Bacterial_glucokinase"/>
</dbReference>
<dbReference type="InterPro" id="IPR003836">
    <property type="entry name" value="Glucokinase"/>
</dbReference>
<dbReference type="NCBIfam" id="TIGR00749">
    <property type="entry name" value="glk"/>
    <property type="match status" value="1"/>
</dbReference>
<dbReference type="NCBIfam" id="NF001415">
    <property type="entry name" value="PRK00292.1-2"/>
    <property type="match status" value="1"/>
</dbReference>
<dbReference type="PANTHER" id="PTHR47690">
    <property type="entry name" value="GLUCOKINASE"/>
    <property type="match status" value="1"/>
</dbReference>
<dbReference type="PANTHER" id="PTHR47690:SF1">
    <property type="entry name" value="GLUCOKINASE"/>
    <property type="match status" value="1"/>
</dbReference>
<dbReference type="Pfam" id="PF02685">
    <property type="entry name" value="Glucokinase"/>
    <property type="match status" value="1"/>
</dbReference>
<dbReference type="SUPFAM" id="SSF53067">
    <property type="entry name" value="Actin-like ATPase domain"/>
    <property type="match status" value="1"/>
</dbReference>
<comment type="catalytic activity">
    <reaction evidence="1">
        <text>D-glucose + ATP = D-glucose 6-phosphate + ADP + H(+)</text>
        <dbReference type="Rhea" id="RHEA:17825"/>
        <dbReference type="ChEBI" id="CHEBI:4167"/>
        <dbReference type="ChEBI" id="CHEBI:15378"/>
        <dbReference type="ChEBI" id="CHEBI:30616"/>
        <dbReference type="ChEBI" id="CHEBI:61548"/>
        <dbReference type="ChEBI" id="CHEBI:456216"/>
        <dbReference type="EC" id="2.7.1.2"/>
    </reaction>
</comment>
<comment type="subcellular location">
    <subcellularLocation>
        <location evidence="1">Cytoplasm</location>
    </subcellularLocation>
</comment>
<comment type="similarity">
    <text evidence="1">Belongs to the bacterial glucokinase family.</text>
</comment>
<feature type="chain" id="PRO_0000215133" description="Glucokinase">
    <location>
        <begin position="1"/>
        <end position="331"/>
    </location>
</feature>
<feature type="binding site" evidence="1">
    <location>
        <begin position="16"/>
        <end position="21"/>
    </location>
    <ligand>
        <name>ATP</name>
        <dbReference type="ChEBI" id="CHEBI:30616"/>
    </ligand>
</feature>
<sequence>MNNDNKRSAGGLGLVGDIGGTNARFALWRGQRLESIEVLACADYPRPELAVRDYLARIGESVANIDSVCLACAGPVGAADFRFTNNHWVINRAAFREELGLDHLLLVNDFSTMAWAASRLGADELVQVRAGSAQADRARLIIGPGTGLGVGSLLPLGGGRWEVLPCEGGHVDLPVTSPRDFALWQGLQARYGHVSAERALSGNGLLALYEISCALDGVAVRASSAAEVGALAMAGDAQADAVLEHFFLWLARVAGNAVLTVGALGGVYITGGIVPRFLERFIASGFAEAFASRGKTSGAYLQDVPVWVMTAEHPGLLGAGVALQQALDAEG</sequence>
<reference key="1">
    <citation type="journal article" date="2000" name="Nature">
        <title>Complete genome sequence of Pseudomonas aeruginosa PAO1, an opportunistic pathogen.</title>
        <authorList>
            <person name="Stover C.K."/>
            <person name="Pham X.-Q.T."/>
            <person name="Erwin A.L."/>
            <person name="Mizoguchi S.D."/>
            <person name="Warrener P."/>
            <person name="Hickey M.J."/>
            <person name="Brinkman F.S.L."/>
            <person name="Hufnagle W.O."/>
            <person name="Kowalik D.J."/>
            <person name="Lagrou M."/>
            <person name="Garber R.L."/>
            <person name="Goltry L."/>
            <person name="Tolentino E."/>
            <person name="Westbrock-Wadman S."/>
            <person name="Yuan Y."/>
            <person name="Brody L.L."/>
            <person name="Coulter S.N."/>
            <person name="Folger K.R."/>
            <person name="Kas A."/>
            <person name="Larbig K."/>
            <person name="Lim R.M."/>
            <person name="Smith K.A."/>
            <person name="Spencer D.H."/>
            <person name="Wong G.K.-S."/>
            <person name="Wu Z."/>
            <person name="Paulsen I.T."/>
            <person name="Reizer J."/>
            <person name="Saier M.H. Jr."/>
            <person name="Hancock R.E.W."/>
            <person name="Lory S."/>
            <person name="Olson M.V."/>
        </authorList>
    </citation>
    <scope>NUCLEOTIDE SEQUENCE [LARGE SCALE GENOMIC DNA]</scope>
    <source>
        <strain>ATCC 15692 / DSM 22644 / CIP 104116 / JCM 14847 / LMG 12228 / 1C / PRS 101 / PAO1</strain>
    </source>
</reference>
<organism>
    <name type="scientific">Pseudomonas aeruginosa (strain ATCC 15692 / DSM 22644 / CIP 104116 / JCM 14847 / LMG 12228 / 1C / PRS 101 / PAO1)</name>
    <dbReference type="NCBI Taxonomy" id="208964"/>
    <lineage>
        <taxon>Bacteria</taxon>
        <taxon>Pseudomonadati</taxon>
        <taxon>Pseudomonadota</taxon>
        <taxon>Gammaproteobacteria</taxon>
        <taxon>Pseudomonadales</taxon>
        <taxon>Pseudomonadaceae</taxon>
        <taxon>Pseudomonas</taxon>
    </lineage>
</organism>
<proteinExistence type="inferred from homology"/>
<name>GLK_PSEAE</name>
<keyword id="KW-0067">ATP-binding</keyword>
<keyword id="KW-0963">Cytoplasm</keyword>
<keyword id="KW-0324">Glycolysis</keyword>
<keyword id="KW-0418">Kinase</keyword>
<keyword id="KW-0547">Nucleotide-binding</keyword>
<keyword id="KW-1185">Reference proteome</keyword>
<keyword id="KW-0808">Transferase</keyword>
<gene>
    <name evidence="1" type="primary">glk</name>
    <name type="ordered locus">PA3193</name>
</gene>
<evidence type="ECO:0000255" key="1">
    <source>
        <dbReference type="HAMAP-Rule" id="MF_00524"/>
    </source>
</evidence>
<protein>
    <recommendedName>
        <fullName evidence="1">Glucokinase</fullName>
        <ecNumber evidence="1">2.7.1.2</ecNumber>
    </recommendedName>
    <alternativeName>
        <fullName evidence="1">Glucose kinase</fullName>
    </alternativeName>
</protein>
<accession>Q9HZ46</accession>